<accession>Q95003</accession>
<keyword id="KW-0325">Glycoprotein</keyword>
<keyword id="KW-0560">Oxidoreductase</keyword>
<keyword id="KW-0575">Peroxidase</keyword>
<keyword id="KW-1185">Reference proteome</keyword>
<keyword id="KW-0964">Secreted</keyword>
<keyword id="KW-0732">Signal</keyword>
<protein>
    <recommendedName>
        <fullName>Glutathione peroxidase 3</fullName>
        <ecNumber>1.11.1.9</ecNumber>
    </recommendedName>
</protein>
<organism>
    <name type="scientific">Caenorhabditis elegans</name>
    <dbReference type="NCBI Taxonomy" id="6239"/>
    <lineage>
        <taxon>Eukaryota</taxon>
        <taxon>Metazoa</taxon>
        <taxon>Ecdysozoa</taxon>
        <taxon>Nematoda</taxon>
        <taxon>Chromadorea</taxon>
        <taxon>Rhabditida</taxon>
        <taxon>Rhabditina</taxon>
        <taxon>Rhabditomorpha</taxon>
        <taxon>Rhabditoidea</taxon>
        <taxon>Rhabditidae</taxon>
        <taxon>Peloderinae</taxon>
        <taxon>Caenorhabditis</taxon>
    </lineage>
</organism>
<dbReference type="EC" id="1.11.1.9"/>
<dbReference type="EMBL" id="Z81015">
    <property type="protein sequence ID" value="CAB02655.1"/>
    <property type="molecule type" value="Genomic_DNA"/>
</dbReference>
<dbReference type="PIR" id="T19190">
    <property type="entry name" value="T19190"/>
</dbReference>
<dbReference type="RefSeq" id="NP_509616.1">
    <property type="nucleotide sequence ID" value="NM_077215.5"/>
</dbReference>
<dbReference type="SMR" id="Q95003"/>
<dbReference type="FunCoup" id="Q95003">
    <property type="interactions" value="132"/>
</dbReference>
<dbReference type="STRING" id="6239.C11E4.2.1"/>
<dbReference type="PeroxiBase" id="3748">
    <property type="entry name" value="CelGPx03"/>
</dbReference>
<dbReference type="GlyCosmos" id="Q95003">
    <property type="glycosylation" value="1 site, No reported glycans"/>
</dbReference>
<dbReference type="PaxDb" id="6239-C11E4.2"/>
<dbReference type="PeptideAtlas" id="Q95003"/>
<dbReference type="EnsemblMetazoa" id="C11E4.2.1">
    <property type="protein sequence ID" value="C11E4.2.1"/>
    <property type="gene ID" value="WBGene00007517"/>
</dbReference>
<dbReference type="GeneID" id="182513"/>
<dbReference type="KEGG" id="cel:CELE_C11E4.2"/>
<dbReference type="UCSC" id="C11E4.2">
    <property type="organism name" value="c. elegans"/>
</dbReference>
<dbReference type="AGR" id="WB:WBGene00007517"/>
<dbReference type="CTD" id="182513"/>
<dbReference type="WormBase" id="C11E4.2">
    <property type="protein sequence ID" value="CE08102"/>
    <property type="gene ID" value="WBGene00007517"/>
    <property type="gene designation" value="gpx-3"/>
</dbReference>
<dbReference type="eggNOG" id="KOG1651">
    <property type="taxonomic scope" value="Eukaryota"/>
</dbReference>
<dbReference type="GeneTree" id="ENSGT00970000196088"/>
<dbReference type="HOGENOM" id="CLU_029507_2_1_1"/>
<dbReference type="InParanoid" id="Q95003"/>
<dbReference type="OMA" id="WFHRASV"/>
<dbReference type="OrthoDB" id="446890at2759"/>
<dbReference type="PhylomeDB" id="Q95003"/>
<dbReference type="Reactome" id="R-CEL-3299685">
    <property type="pathway name" value="Detoxification of Reactive Oxygen Species"/>
</dbReference>
<dbReference type="PRO" id="PR:Q95003"/>
<dbReference type="Proteomes" id="UP000001940">
    <property type="component" value="Chromosome X"/>
</dbReference>
<dbReference type="Bgee" id="WBGene00007517">
    <property type="expression patterns" value="Expressed in larva and 3 other cell types or tissues"/>
</dbReference>
<dbReference type="GO" id="GO:0005615">
    <property type="term" value="C:extracellular space"/>
    <property type="evidence" value="ECO:0000250"/>
    <property type="project" value="WormBase"/>
</dbReference>
<dbReference type="GO" id="GO:0004602">
    <property type="term" value="F:glutathione peroxidase activity"/>
    <property type="evidence" value="ECO:0000318"/>
    <property type="project" value="GO_Central"/>
</dbReference>
<dbReference type="GO" id="GO:0006979">
    <property type="term" value="P:response to oxidative stress"/>
    <property type="evidence" value="ECO:0007669"/>
    <property type="project" value="InterPro"/>
</dbReference>
<dbReference type="CDD" id="cd00340">
    <property type="entry name" value="GSH_Peroxidase"/>
    <property type="match status" value="1"/>
</dbReference>
<dbReference type="FunFam" id="3.40.30.10:FF:000283">
    <property type="entry name" value="Glutathione peroxidase"/>
    <property type="match status" value="1"/>
</dbReference>
<dbReference type="Gene3D" id="3.40.30.10">
    <property type="entry name" value="Glutaredoxin"/>
    <property type="match status" value="1"/>
</dbReference>
<dbReference type="InterPro" id="IPR000889">
    <property type="entry name" value="Glutathione_peroxidase"/>
</dbReference>
<dbReference type="InterPro" id="IPR029759">
    <property type="entry name" value="GPX_AS"/>
</dbReference>
<dbReference type="InterPro" id="IPR029760">
    <property type="entry name" value="GPX_CS"/>
</dbReference>
<dbReference type="InterPro" id="IPR036249">
    <property type="entry name" value="Thioredoxin-like_sf"/>
</dbReference>
<dbReference type="InterPro" id="IPR013766">
    <property type="entry name" value="Thioredoxin_domain"/>
</dbReference>
<dbReference type="PANTHER" id="PTHR11592">
    <property type="entry name" value="GLUTATHIONE PEROXIDASE"/>
    <property type="match status" value="1"/>
</dbReference>
<dbReference type="PANTHER" id="PTHR11592:SF88">
    <property type="entry name" value="GLUTATHIONE PEROXIDASE-RELATED"/>
    <property type="match status" value="1"/>
</dbReference>
<dbReference type="Pfam" id="PF00255">
    <property type="entry name" value="GSHPx"/>
    <property type="match status" value="1"/>
</dbReference>
<dbReference type="PIRSF" id="PIRSF000303">
    <property type="entry name" value="Glutathion_perox"/>
    <property type="match status" value="1"/>
</dbReference>
<dbReference type="PRINTS" id="PR01011">
    <property type="entry name" value="GLUTPROXDASE"/>
</dbReference>
<dbReference type="SUPFAM" id="SSF52833">
    <property type="entry name" value="Thioredoxin-like"/>
    <property type="match status" value="1"/>
</dbReference>
<dbReference type="PROSITE" id="PS00460">
    <property type="entry name" value="GLUTATHIONE_PEROXID_1"/>
    <property type="match status" value="1"/>
</dbReference>
<dbReference type="PROSITE" id="PS00763">
    <property type="entry name" value="GLUTATHIONE_PEROXID_2"/>
    <property type="match status" value="1"/>
</dbReference>
<dbReference type="PROSITE" id="PS51355">
    <property type="entry name" value="GLUTATHIONE_PEROXID_3"/>
    <property type="match status" value="1"/>
</dbReference>
<proteinExistence type="inferred from homology"/>
<sequence>MAPGSVLSLAVALATIIGISCTATVDETMRWKECLNTNQSIFDFQIETLQGEYTDLSQYRGKVILLVNVATFCAYTQQYTDFNPMLEKYQAQGLTLVAFPCNQFYLQEPAENHELMNGLTYVRPGNGWTPHQELHIYGKIDVNGDNHHPLYEFVKESCPQTVDKIGKTDELMYNPVRPSDITWNFEKFLIDRNGQPRFRFHPTAWSHGDVVTPFIEQLLAEPAN</sequence>
<gene>
    <name type="primary">gpx-3</name>
    <name type="ORF">C11E4.2</name>
</gene>
<evidence type="ECO:0000250" key="1"/>
<evidence type="ECO:0000255" key="2"/>
<evidence type="ECO:0000305" key="3"/>
<feature type="signal peptide" evidence="2">
    <location>
        <begin position="1"/>
        <end position="18"/>
    </location>
</feature>
<feature type="chain" id="PRO_0000013090" description="Glutathione peroxidase 3">
    <location>
        <begin position="19"/>
        <end position="224"/>
    </location>
</feature>
<feature type="active site" evidence="1">
    <location>
        <position position="73"/>
    </location>
</feature>
<feature type="glycosylation site" description="N-linked (GlcNAc...) asparagine" evidence="2">
    <location>
        <position position="38"/>
    </location>
</feature>
<reference key="1">
    <citation type="journal article" date="1998" name="Science">
        <title>Genome sequence of the nematode C. elegans: a platform for investigating biology.</title>
        <authorList>
            <consortium name="The C. elegans sequencing consortium"/>
        </authorList>
    </citation>
    <scope>NUCLEOTIDE SEQUENCE [LARGE SCALE GENOMIC DNA]</scope>
    <source>
        <strain>Bristol N2</strain>
    </source>
</reference>
<name>GPX3_CAEEL</name>
<comment type="catalytic activity">
    <reaction>
        <text>2 glutathione + H2O2 = glutathione disulfide + 2 H2O</text>
        <dbReference type="Rhea" id="RHEA:16833"/>
        <dbReference type="ChEBI" id="CHEBI:15377"/>
        <dbReference type="ChEBI" id="CHEBI:16240"/>
        <dbReference type="ChEBI" id="CHEBI:57925"/>
        <dbReference type="ChEBI" id="CHEBI:58297"/>
        <dbReference type="EC" id="1.11.1.9"/>
    </reaction>
</comment>
<comment type="subcellular location">
    <subcellularLocation>
        <location evidence="1">Secreted</location>
        <location evidence="1">Extracellular space</location>
    </subcellularLocation>
</comment>
<comment type="similarity">
    <text evidence="3">Belongs to the glutathione peroxidase family.</text>
</comment>